<comment type="similarity">
    <text evidence="1">Belongs to the UPF0597 family.</text>
</comment>
<gene>
    <name type="ordered locus">Clos_2050</name>
</gene>
<organism>
    <name type="scientific">Alkaliphilus oremlandii (strain OhILAs)</name>
    <name type="common">Clostridium oremlandii (strain OhILAs)</name>
    <dbReference type="NCBI Taxonomy" id="350688"/>
    <lineage>
        <taxon>Bacteria</taxon>
        <taxon>Bacillati</taxon>
        <taxon>Bacillota</taxon>
        <taxon>Clostridia</taxon>
        <taxon>Peptostreptococcales</taxon>
        <taxon>Natronincolaceae</taxon>
        <taxon>Alkaliphilus</taxon>
    </lineage>
</organism>
<keyword id="KW-1185">Reference proteome</keyword>
<proteinExistence type="inferred from homology"/>
<sequence length="430" mass="45560">MELKNLIIKTLKEEVVPAMGCTEPVAVALGCAKAKELLGDMDITKAEILVSPNIYKNGLSVGIPNTNEVGLFIAGALGIVAGKSEKDLQVLSGIVEEDVVIAHELLKEEKVTIDIKPTIEKIYVEVNLYAEEGSSTAIIQGRHNEFVYLAQSGNILLNGLQEATSSTKSTNPLFEMKIRDIIKEISELGMDEIGFMLEGLEMNEKIAMEGLKNTSGISVGRTIYENIQKGILADDLMNTAMMLTAAGSDARMSGIRMPVMSSSGSGNNGLTAILPILAYHKKFPVEDRPLAQALAISHMTNSYIKHYIGRLSALCGCGVAAGTGASISIAWLMGADAEKIDGTIKNMIGNLSGMICDGAKVGCALKLATSASAAIQSALLALNGHVIPSKNGIIGDTAEDTIKNLGILSEEGMYFADHTILKVMKAMEGV</sequence>
<feature type="chain" id="PRO_0000339784" description="UPF0597 protein Clos_2050">
    <location>
        <begin position="1"/>
        <end position="430"/>
    </location>
</feature>
<evidence type="ECO:0000255" key="1">
    <source>
        <dbReference type="HAMAP-Rule" id="MF_01845"/>
    </source>
</evidence>
<name>Y2050_ALKOO</name>
<protein>
    <recommendedName>
        <fullName evidence="1">UPF0597 protein Clos_2050</fullName>
    </recommendedName>
</protein>
<dbReference type="EMBL" id="CP000853">
    <property type="protein sequence ID" value="ABW19586.1"/>
    <property type="molecule type" value="Genomic_DNA"/>
</dbReference>
<dbReference type="RefSeq" id="WP_012159895.1">
    <property type="nucleotide sequence ID" value="NC_009922.1"/>
</dbReference>
<dbReference type="STRING" id="350688.Clos_2050"/>
<dbReference type="KEGG" id="aoe:Clos_2050"/>
<dbReference type="eggNOG" id="COG3681">
    <property type="taxonomic scope" value="Bacteria"/>
</dbReference>
<dbReference type="HOGENOM" id="CLU_051840_0_0_9"/>
<dbReference type="OrthoDB" id="41906at2"/>
<dbReference type="Proteomes" id="UP000000269">
    <property type="component" value="Chromosome"/>
</dbReference>
<dbReference type="GO" id="GO:0080146">
    <property type="term" value="F:L-cysteine desulfhydrase activity"/>
    <property type="evidence" value="ECO:0007669"/>
    <property type="project" value="TreeGrafter"/>
</dbReference>
<dbReference type="GO" id="GO:0019450">
    <property type="term" value="P:L-cysteine catabolic process to pyruvate"/>
    <property type="evidence" value="ECO:0007669"/>
    <property type="project" value="TreeGrafter"/>
</dbReference>
<dbReference type="HAMAP" id="MF_01845">
    <property type="entry name" value="UPF0597"/>
    <property type="match status" value="1"/>
</dbReference>
<dbReference type="InterPro" id="IPR005130">
    <property type="entry name" value="Ser_deHydtase-like_asu"/>
</dbReference>
<dbReference type="InterPro" id="IPR021144">
    <property type="entry name" value="UPF0597"/>
</dbReference>
<dbReference type="PANTHER" id="PTHR30501">
    <property type="entry name" value="UPF0597 PROTEIN YHAM"/>
    <property type="match status" value="1"/>
</dbReference>
<dbReference type="PANTHER" id="PTHR30501:SF2">
    <property type="entry name" value="UPF0597 PROTEIN YHAM"/>
    <property type="match status" value="1"/>
</dbReference>
<dbReference type="Pfam" id="PF03313">
    <property type="entry name" value="SDH_alpha"/>
    <property type="match status" value="1"/>
</dbReference>
<dbReference type="PIRSF" id="PIRSF006054">
    <property type="entry name" value="UCP006054"/>
    <property type="match status" value="1"/>
</dbReference>
<reference key="1">
    <citation type="submission" date="2007-10" db="EMBL/GenBank/DDBJ databases">
        <title>Complete genome of Alkaliphilus oremlandii OhILAs.</title>
        <authorList>
            <person name="Copeland A."/>
            <person name="Lucas S."/>
            <person name="Lapidus A."/>
            <person name="Barry K."/>
            <person name="Detter J.C."/>
            <person name="Glavina del Rio T."/>
            <person name="Hammon N."/>
            <person name="Israni S."/>
            <person name="Dalin E."/>
            <person name="Tice H."/>
            <person name="Pitluck S."/>
            <person name="Chain P."/>
            <person name="Malfatti S."/>
            <person name="Shin M."/>
            <person name="Vergez L."/>
            <person name="Schmutz J."/>
            <person name="Larimer F."/>
            <person name="Land M."/>
            <person name="Hauser L."/>
            <person name="Kyrpides N."/>
            <person name="Mikhailova N."/>
            <person name="Stolz J.F."/>
            <person name="Dawson A."/>
            <person name="Fisher E."/>
            <person name="Crable B."/>
            <person name="Perera E."/>
            <person name="Lisak J."/>
            <person name="Ranganathan M."/>
            <person name="Basu P."/>
            <person name="Richardson P."/>
        </authorList>
    </citation>
    <scope>NUCLEOTIDE SEQUENCE [LARGE SCALE GENOMIC DNA]</scope>
    <source>
        <strain>OhILAs</strain>
    </source>
</reference>
<accession>A8MIF4</accession>